<organism>
    <name type="scientific">Chromobacterium violaceum (strain ATCC 12472 / DSM 30191 / JCM 1249 / CCUG 213 / NBRC 12614 / NCIMB 9131 / NCTC 9757 / MK)</name>
    <dbReference type="NCBI Taxonomy" id="243365"/>
    <lineage>
        <taxon>Bacteria</taxon>
        <taxon>Pseudomonadati</taxon>
        <taxon>Pseudomonadota</taxon>
        <taxon>Betaproteobacteria</taxon>
        <taxon>Neisseriales</taxon>
        <taxon>Chromobacteriaceae</taxon>
        <taxon>Chromobacterium</taxon>
    </lineage>
</organism>
<evidence type="ECO:0000255" key="1">
    <source>
        <dbReference type="HAMAP-Rule" id="MF_01357"/>
    </source>
</evidence>
<dbReference type="EC" id="7.1.1.-" evidence="1"/>
<dbReference type="EMBL" id="AE016825">
    <property type="protein sequence ID" value="AAQ58617.1"/>
    <property type="molecule type" value="Genomic_DNA"/>
</dbReference>
<dbReference type="RefSeq" id="WP_011134498.1">
    <property type="nucleotide sequence ID" value="NC_005085.1"/>
</dbReference>
<dbReference type="SMR" id="Q7NZH9"/>
<dbReference type="STRING" id="243365.CV_0943"/>
<dbReference type="KEGG" id="cvi:CV_0943"/>
<dbReference type="eggNOG" id="COG0852">
    <property type="taxonomic scope" value="Bacteria"/>
</dbReference>
<dbReference type="HOGENOM" id="CLU_042628_2_1_4"/>
<dbReference type="OrthoDB" id="9803286at2"/>
<dbReference type="Proteomes" id="UP000001424">
    <property type="component" value="Chromosome"/>
</dbReference>
<dbReference type="GO" id="GO:0005886">
    <property type="term" value="C:plasma membrane"/>
    <property type="evidence" value="ECO:0007669"/>
    <property type="project" value="UniProtKB-SubCell"/>
</dbReference>
<dbReference type="GO" id="GO:0008137">
    <property type="term" value="F:NADH dehydrogenase (ubiquinone) activity"/>
    <property type="evidence" value="ECO:0007669"/>
    <property type="project" value="InterPro"/>
</dbReference>
<dbReference type="GO" id="GO:0050136">
    <property type="term" value="F:NADH:ubiquinone reductase (non-electrogenic) activity"/>
    <property type="evidence" value="ECO:0007669"/>
    <property type="project" value="UniProtKB-UniRule"/>
</dbReference>
<dbReference type="GO" id="GO:0048038">
    <property type="term" value="F:quinone binding"/>
    <property type="evidence" value="ECO:0007669"/>
    <property type="project" value="UniProtKB-KW"/>
</dbReference>
<dbReference type="Gene3D" id="3.30.460.80">
    <property type="entry name" value="NADH:ubiquinone oxidoreductase, 30kDa subunit"/>
    <property type="match status" value="1"/>
</dbReference>
<dbReference type="HAMAP" id="MF_01357">
    <property type="entry name" value="NDH1_NuoC"/>
    <property type="match status" value="1"/>
</dbReference>
<dbReference type="InterPro" id="IPR010218">
    <property type="entry name" value="NADH_DH_suC"/>
</dbReference>
<dbReference type="InterPro" id="IPR037232">
    <property type="entry name" value="NADH_quin_OxRdtase_su_C/D-like"/>
</dbReference>
<dbReference type="InterPro" id="IPR001268">
    <property type="entry name" value="NADH_UbQ_OxRdtase_30kDa_su"/>
</dbReference>
<dbReference type="InterPro" id="IPR020396">
    <property type="entry name" value="NADH_UbQ_OxRdtase_CS"/>
</dbReference>
<dbReference type="NCBIfam" id="TIGR01961">
    <property type="entry name" value="NuoC_fam"/>
    <property type="match status" value="1"/>
</dbReference>
<dbReference type="NCBIfam" id="NF004730">
    <property type="entry name" value="PRK06074.1-1"/>
    <property type="match status" value="1"/>
</dbReference>
<dbReference type="PANTHER" id="PTHR10884:SF14">
    <property type="entry name" value="NADH DEHYDROGENASE [UBIQUINONE] IRON-SULFUR PROTEIN 3, MITOCHONDRIAL"/>
    <property type="match status" value="1"/>
</dbReference>
<dbReference type="PANTHER" id="PTHR10884">
    <property type="entry name" value="NADH DEHYDROGENASE UBIQUINONE IRON-SULFUR PROTEIN 3"/>
    <property type="match status" value="1"/>
</dbReference>
<dbReference type="Pfam" id="PF00329">
    <property type="entry name" value="Complex1_30kDa"/>
    <property type="match status" value="1"/>
</dbReference>
<dbReference type="SUPFAM" id="SSF143243">
    <property type="entry name" value="Nqo5-like"/>
    <property type="match status" value="1"/>
</dbReference>
<dbReference type="PROSITE" id="PS00542">
    <property type="entry name" value="COMPLEX1_30K"/>
    <property type="match status" value="1"/>
</dbReference>
<accession>Q7NZH9</accession>
<gene>
    <name evidence="1" type="primary">nuoC</name>
    <name type="ordered locus">CV_0943</name>
</gene>
<keyword id="KW-0997">Cell inner membrane</keyword>
<keyword id="KW-1003">Cell membrane</keyword>
<keyword id="KW-0472">Membrane</keyword>
<keyword id="KW-0520">NAD</keyword>
<keyword id="KW-0874">Quinone</keyword>
<keyword id="KW-1185">Reference proteome</keyword>
<keyword id="KW-1278">Translocase</keyword>
<keyword id="KW-0813">Transport</keyword>
<keyword id="KW-0830">Ubiquinone</keyword>
<comment type="function">
    <text evidence="1">NDH-1 shuttles electrons from NADH, via FMN and iron-sulfur (Fe-S) centers, to quinones in the respiratory chain. The immediate electron acceptor for the enzyme in this species is believed to be ubiquinone. Couples the redox reaction to proton translocation (for every two electrons transferred, four hydrogen ions are translocated across the cytoplasmic membrane), and thus conserves the redox energy in a proton gradient.</text>
</comment>
<comment type="catalytic activity">
    <reaction evidence="1">
        <text>a quinone + NADH + 5 H(+)(in) = a quinol + NAD(+) + 4 H(+)(out)</text>
        <dbReference type="Rhea" id="RHEA:57888"/>
        <dbReference type="ChEBI" id="CHEBI:15378"/>
        <dbReference type="ChEBI" id="CHEBI:24646"/>
        <dbReference type="ChEBI" id="CHEBI:57540"/>
        <dbReference type="ChEBI" id="CHEBI:57945"/>
        <dbReference type="ChEBI" id="CHEBI:132124"/>
    </reaction>
</comment>
<comment type="subunit">
    <text evidence="1">NDH-1 is composed of 14 different subunits. Subunits NuoB, C, D, E, F, and G constitute the peripheral sector of the complex.</text>
</comment>
<comment type="subcellular location">
    <subcellularLocation>
        <location evidence="1">Cell inner membrane</location>
        <topology evidence="1">Peripheral membrane protein</topology>
        <orientation evidence="1">Cytoplasmic side</orientation>
    </subcellularLocation>
</comment>
<comment type="similarity">
    <text evidence="1">Belongs to the complex I 30 kDa subunit family.</text>
</comment>
<feature type="chain" id="PRO_0000358083" description="NADH-quinone oxidoreductase subunit C">
    <location>
        <begin position="1"/>
        <end position="198"/>
    </location>
</feature>
<sequence length="198" mass="22643">MASKKMEALGSVVAEALGDKLVRSTLALDELTIVCKASDLLSVAQTLRDHADLAFEQCIDVCGMDYSAYRDEPWDGPRFAAVYHLLSVKLNHRIRLRVFAEDDDFPVIPSVNGIWNAANWFEREAFDLYGIVFEGHPDLRRLLTDYGFVGHPFRKDFPLSGYVEMRYDPTQQRVIYQPVTIEPREITPRIIREENYGG</sequence>
<name>NUOC_CHRVO</name>
<protein>
    <recommendedName>
        <fullName evidence="1">NADH-quinone oxidoreductase subunit C</fullName>
        <ecNumber evidence="1">7.1.1.-</ecNumber>
    </recommendedName>
    <alternativeName>
        <fullName evidence="1">NADH dehydrogenase I subunit C</fullName>
    </alternativeName>
    <alternativeName>
        <fullName evidence="1">NDH-1 subunit C</fullName>
    </alternativeName>
</protein>
<proteinExistence type="inferred from homology"/>
<reference key="1">
    <citation type="journal article" date="2003" name="Proc. Natl. Acad. Sci. U.S.A.">
        <title>The complete genome sequence of Chromobacterium violaceum reveals remarkable and exploitable bacterial adaptability.</title>
        <authorList>
            <person name="Vasconcelos A.T.R."/>
            <person name="de Almeida D.F."/>
            <person name="Hungria M."/>
            <person name="Guimaraes C.T."/>
            <person name="Antonio R.V."/>
            <person name="Almeida F.C."/>
            <person name="de Almeida L.G.P."/>
            <person name="de Almeida R."/>
            <person name="Alves-Gomes J.A."/>
            <person name="Andrade E.M."/>
            <person name="Araripe J."/>
            <person name="de Araujo M.F.F."/>
            <person name="Astolfi-Filho S."/>
            <person name="Azevedo V."/>
            <person name="Baptista A.J."/>
            <person name="Bataus L.A.M."/>
            <person name="Batista J.S."/>
            <person name="Belo A."/>
            <person name="van den Berg C."/>
            <person name="Bogo M."/>
            <person name="Bonatto S."/>
            <person name="Bordignon J."/>
            <person name="Brigido M.M."/>
            <person name="Brito C.A."/>
            <person name="Brocchi M."/>
            <person name="Burity H.A."/>
            <person name="Camargo A.A."/>
            <person name="Cardoso D.D.P."/>
            <person name="Carneiro N.P."/>
            <person name="Carraro D.M."/>
            <person name="Carvalho C.M.B."/>
            <person name="Cascardo J.C.M."/>
            <person name="Cavada B.S."/>
            <person name="Chueire L.M.O."/>
            <person name="Creczynski-Pasa T.B."/>
            <person name="Cunha-Junior N.C."/>
            <person name="Fagundes N."/>
            <person name="Falcao C.L."/>
            <person name="Fantinatti F."/>
            <person name="Farias I.P."/>
            <person name="Felipe M.S.S."/>
            <person name="Ferrari L.P."/>
            <person name="Ferro J.A."/>
            <person name="Ferro M.I.T."/>
            <person name="Franco G.R."/>
            <person name="Freitas N.S.A."/>
            <person name="Furlan L.R."/>
            <person name="Gazzinelli R.T."/>
            <person name="Gomes E.A."/>
            <person name="Goncalves P.R."/>
            <person name="Grangeiro T.B."/>
            <person name="Grattapaglia D."/>
            <person name="Grisard E.C."/>
            <person name="Hanna E.S."/>
            <person name="Jardim S.N."/>
            <person name="Laurino J."/>
            <person name="Leoi L.C.T."/>
            <person name="Lima L.F.A."/>
            <person name="Loureiro M.F."/>
            <person name="Lyra M.C.C.P."/>
            <person name="Madeira H.M.F."/>
            <person name="Manfio G.P."/>
            <person name="Maranhao A.Q."/>
            <person name="Martins W.S."/>
            <person name="di Mauro S.M.Z."/>
            <person name="de Medeiros S.R.B."/>
            <person name="Meissner R.V."/>
            <person name="Moreira M.A.M."/>
            <person name="Nascimento F.F."/>
            <person name="Nicolas M.F."/>
            <person name="Oliveira J.G."/>
            <person name="Oliveira S.C."/>
            <person name="Paixao R.F.C."/>
            <person name="Parente J.A."/>
            <person name="Pedrosa F.O."/>
            <person name="Pena S.D.J."/>
            <person name="Pereira J.O."/>
            <person name="Pereira M."/>
            <person name="Pinto L.S.R.C."/>
            <person name="Pinto L.S."/>
            <person name="Porto J.I.R."/>
            <person name="Potrich D.P."/>
            <person name="Ramalho-Neto C.E."/>
            <person name="Reis A.M.M."/>
            <person name="Rigo L.U."/>
            <person name="Rondinelli E."/>
            <person name="Santos E.B.P."/>
            <person name="Santos F.R."/>
            <person name="Schneider M.P.C."/>
            <person name="Seuanez H.N."/>
            <person name="Silva A.M.R."/>
            <person name="da Silva A.L.C."/>
            <person name="Silva D.W."/>
            <person name="Silva R."/>
            <person name="Simoes I.C."/>
            <person name="Simon D."/>
            <person name="Soares C.M.A."/>
            <person name="Soares R.B.A."/>
            <person name="Souza E.M."/>
            <person name="Souza K.R.L."/>
            <person name="Souza R.C."/>
            <person name="Steffens M.B.R."/>
            <person name="Steindel M."/>
            <person name="Teixeira S.R."/>
            <person name="Urmenyi T."/>
            <person name="Vettore A."/>
            <person name="Wassem R."/>
            <person name="Zaha A."/>
            <person name="Simpson A.J.G."/>
        </authorList>
    </citation>
    <scope>NUCLEOTIDE SEQUENCE [LARGE SCALE GENOMIC DNA]</scope>
    <source>
        <strain>ATCC 12472 / DSM 30191 / JCM 1249 / CCUG 213 / NBRC 12614 / NCIMB 9131 / NCTC 9757 / MK</strain>
    </source>
</reference>